<keyword id="KW-0053">Apoptosis</keyword>
<keyword id="KW-0256">Endoplasmic reticulum</keyword>
<keyword id="KW-0472">Membrane</keyword>
<keyword id="KW-0496">Mitochondrion</keyword>
<keyword id="KW-1000">Mitochondrion outer membrane</keyword>
<keyword id="KW-0539">Nucleus</keyword>
<keyword id="KW-0597">Phosphoprotein</keyword>
<keyword id="KW-1185">Reference proteome</keyword>
<keyword id="KW-0812">Transmembrane</keyword>
<keyword id="KW-1133">Transmembrane helix</keyword>
<dbReference type="EMBL" id="BT030544">
    <property type="protein sequence ID" value="ABQ12984.1"/>
    <property type="molecule type" value="mRNA"/>
</dbReference>
<dbReference type="EMBL" id="BC102612">
    <property type="protein sequence ID" value="AAI02613.1"/>
    <property type="molecule type" value="mRNA"/>
</dbReference>
<dbReference type="RefSeq" id="NP_001029786.1">
    <property type="nucleotide sequence ID" value="NM_001034614.2"/>
</dbReference>
<dbReference type="SMR" id="Q3T013"/>
<dbReference type="FunCoup" id="Q3T013">
    <property type="interactions" value="2299"/>
</dbReference>
<dbReference type="STRING" id="9913.ENSBTAP00000033770"/>
<dbReference type="PaxDb" id="9913-ENSBTAP00000033770"/>
<dbReference type="Ensembl" id="ENSBTAT00000033862.5">
    <property type="protein sequence ID" value="ENSBTAP00000033770.3"/>
    <property type="gene ID" value="ENSBTAG00000021307.6"/>
</dbReference>
<dbReference type="GeneID" id="534615"/>
<dbReference type="KEGG" id="bta:534615"/>
<dbReference type="CTD" id="665"/>
<dbReference type="VEuPathDB" id="HostDB:ENSBTAG00000021307"/>
<dbReference type="VGNC" id="VGNC:26534">
    <property type="gene designation" value="BNIP3L"/>
</dbReference>
<dbReference type="eggNOG" id="ENOG502R8Q5">
    <property type="taxonomic scope" value="Eukaryota"/>
</dbReference>
<dbReference type="GeneTree" id="ENSGT00390000013415"/>
<dbReference type="HOGENOM" id="CLU_091463_1_1_1"/>
<dbReference type="InParanoid" id="Q3T013"/>
<dbReference type="OMA" id="QKSVDWV"/>
<dbReference type="OrthoDB" id="5857140at2759"/>
<dbReference type="TreeFam" id="TF315424"/>
<dbReference type="Reactome" id="R-BTA-6803204">
    <property type="pathway name" value="TP53 Regulates Transcription of Genes Involved in Cytochrome C Release"/>
</dbReference>
<dbReference type="Proteomes" id="UP000009136">
    <property type="component" value="Chromosome 8"/>
</dbReference>
<dbReference type="Bgee" id="ENSBTAG00000021307">
    <property type="expression patterns" value="Expressed in granulosa cell and 102 other cell types or tissues"/>
</dbReference>
<dbReference type="GO" id="GO:0005783">
    <property type="term" value="C:endoplasmic reticulum"/>
    <property type="evidence" value="ECO:0000318"/>
    <property type="project" value="GO_Central"/>
</dbReference>
<dbReference type="GO" id="GO:0005741">
    <property type="term" value="C:mitochondrial outer membrane"/>
    <property type="evidence" value="ECO:0000250"/>
    <property type="project" value="UniProtKB"/>
</dbReference>
<dbReference type="GO" id="GO:0005739">
    <property type="term" value="C:mitochondrion"/>
    <property type="evidence" value="ECO:0000250"/>
    <property type="project" value="UniProtKB"/>
</dbReference>
<dbReference type="GO" id="GO:0005635">
    <property type="term" value="C:nuclear envelope"/>
    <property type="evidence" value="ECO:0000318"/>
    <property type="project" value="GO_Central"/>
</dbReference>
<dbReference type="GO" id="GO:0005634">
    <property type="term" value="C:nucleus"/>
    <property type="evidence" value="ECO:0000318"/>
    <property type="project" value="GO_Central"/>
</dbReference>
<dbReference type="GO" id="GO:0042802">
    <property type="term" value="F:identical protein binding"/>
    <property type="evidence" value="ECO:0007669"/>
    <property type="project" value="UniProtKB-ARBA"/>
</dbReference>
<dbReference type="GO" id="GO:0051607">
    <property type="term" value="P:defense response to virus"/>
    <property type="evidence" value="ECO:0000250"/>
    <property type="project" value="UniProtKB"/>
</dbReference>
<dbReference type="GO" id="GO:0097345">
    <property type="term" value="P:mitochondrial outer membrane permeabilization"/>
    <property type="evidence" value="ECO:0000318"/>
    <property type="project" value="GO_Central"/>
</dbReference>
<dbReference type="GO" id="GO:0035694">
    <property type="term" value="P:mitochondrial protein catabolic process"/>
    <property type="evidence" value="ECO:0000250"/>
    <property type="project" value="UniProtKB"/>
</dbReference>
<dbReference type="GO" id="GO:0043065">
    <property type="term" value="P:positive regulation of apoptotic process"/>
    <property type="evidence" value="ECO:0000250"/>
    <property type="project" value="UniProtKB"/>
</dbReference>
<dbReference type="GO" id="GO:0043067">
    <property type="term" value="P:regulation of programmed cell death"/>
    <property type="evidence" value="ECO:0000318"/>
    <property type="project" value="GO_Central"/>
</dbReference>
<dbReference type="Gene3D" id="6.10.250.1020">
    <property type="match status" value="1"/>
</dbReference>
<dbReference type="InterPro" id="IPR010548">
    <property type="entry name" value="BNIP3"/>
</dbReference>
<dbReference type="PANTHER" id="PTHR15186:SF3">
    <property type="entry name" value="BCL2_ADENOVIRUS E1B 19 KDA PROTEIN-INTERACTING PROTEIN 3-LIKE"/>
    <property type="match status" value="1"/>
</dbReference>
<dbReference type="PANTHER" id="PTHR15186">
    <property type="entry name" value="RE48077P"/>
    <property type="match status" value="1"/>
</dbReference>
<dbReference type="Pfam" id="PF06553">
    <property type="entry name" value="BNIP3"/>
    <property type="match status" value="1"/>
</dbReference>
<name>BNI3L_BOVIN</name>
<organism>
    <name type="scientific">Bos taurus</name>
    <name type="common">Bovine</name>
    <dbReference type="NCBI Taxonomy" id="9913"/>
    <lineage>
        <taxon>Eukaryota</taxon>
        <taxon>Metazoa</taxon>
        <taxon>Chordata</taxon>
        <taxon>Craniata</taxon>
        <taxon>Vertebrata</taxon>
        <taxon>Euteleostomi</taxon>
        <taxon>Mammalia</taxon>
        <taxon>Eutheria</taxon>
        <taxon>Laurasiatheria</taxon>
        <taxon>Artiodactyla</taxon>
        <taxon>Ruminantia</taxon>
        <taxon>Pecora</taxon>
        <taxon>Bovidae</taxon>
        <taxon>Bovinae</taxon>
        <taxon>Bos</taxon>
    </lineage>
</organism>
<comment type="function">
    <text evidence="1">Induces apoptosis. Interacts with viral and cellular anti-apoptosis proteins. Can overcome the suppressors BCL-2 and BCL-XL, although high levels of BCL-XL expression will inhibit apoptosis. Inhibits apoptosis induced by BNIP3. Involved in mitochondrial quality control via its interaction with SPATA18/MIEAP: in response to mitochondrial damage, participates in mitochondrial protein catabolic process (also named MALM) leading to the degradation of damaged proteins inside mitochondria. The physical interaction of SPATA18/MIEAP, BNIP3 and BNIP3L/NIX at the mitochondrial outer membrane regulates the opening of a pore in the mitochondrial double membrane in order to mediate the translocation of lysosomal proteins from the cytoplasm to the mitochondrial matrix (By similarity). May function as a tumor suppressor (By similarity).</text>
</comment>
<comment type="subunit">
    <text evidence="2">Self-associates. Interacts with BNIP3 and STEAP3. Interacts (via BH3 domain) with SPATA18 (via coiled-coil domains). Interacts with PPTC7; this interaction promotes BNIP3L degradation.</text>
</comment>
<comment type="subcellular location">
    <subcellularLocation>
        <location evidence="1">Nucleus envelope</location>
    </subcellularLocation>
    <subcellularLocation>
        <location evidence="1">Endoplasmic reticulum</location>
    </subcellularLocation>
    <subcellularLocation>
        <location evidence="1">Mitochondrion outer membrane</location>
    </subcellularLocation>
    <subcellularLocation>
        <location evidence="6">Membrane</location>
        <topology evidence="6">Single-pass membrane protein</topology>
    </subcellularLocation>
    <text evidence="1">Colocalizes with SPATA18 at the mitochondrion outer membrane.</text>
</comment>
<comment type="PTM">
    <text>Undergoes progressive proteolysis to an 11 kDa C-terminal fragment, which is blocked by the proteasome inhibitor lactacystin.</text>
</comment>
<comment type="similarity">
    <text evidence="6">Belongs to the NIP3 family.</text>
</comment>
<reference key="1">
    <citation type="journal article" date="2005" name="BMC Genomics">
        <title>Characterization of 954 bovine full-CDS cDNA sequences.</title>
        <authorList>
            <person name="Harhay G.P."/>
            <person name="Sonstegard T.S."/>
            <person name="Keele J.W."/>
            <person name="Heaton M.P."/>
            <person name="Clawson M.L."/>
            <person name="Snelling W.M."/>
            <person name="Wiedmann R.T."/>
            <person name="Van Tassell C.P."/>
            <person name="Smith T.P.L."/>
        </authorList>
    </citation>
    <scope>NUCLEOTIDE SEQUENCE [LARGE SCALE MRNA]</scope>
</reference>
<reference key="2">
    <citation type="submission" date="2005-08" db="EMBL/GenBank/DDBJ databases">
        <authorList>
            <consortium name="NIH - Mammalian Gene Collection (MGC) project"/>
        </authorList>
    </citation>
    <scope>NUCLEOTIDE SEQUENCE [LARGE SCALE MRNA]</scope>
    <source>
        <strain>Crossbred X Angus</strain>
        <tissue>Liver</tissue>
    </source>
</reference>
<gene>
    <name type="primary">BNIP3L</name>
</gene>
<evidence type="ECO:0000250" key="1"/>
<evidence type="ECO:0000250" key="2">
    <source>
        <dbReference type="UniProtKB" id="O60238"/>
    </source>
</evidence>
<evidence type="ECO:0000250" key="3">
    <source>
        <dbReference type="UniProtKB" id="Q9Z2F7"/>
    </source>
</evidence>
<evidence type="ECO:0000255" key="4"/>
<evidence type="ECO:0000256" key="5">
    <source>
        <dbReference type="SAM" id="MobiDB-lite"/>
    </source>
</evidence>
<evidence type="ECO:0000305" key="6"/>
<proteinExistence type="evidence at transcript level"/>
<accession>Q3T013</accession>
<accession>A5D9C5</accession>
<protein>
    <recommendedName>
        <fullName>BCL2/adenovirus E1B 19 kDa protein-interacting protein 3-like</fullName>
    </recommendedName>
</protein>
<sequence>MSSHLVEQPPPPHNNNNNCEEGEQSLPPPAGLNSSWVELPMNSSNGNDNGNGKNGGLEHVPSSSSIHNGDMEKILLDAQHESGQSSSRGSSHCDSPSPQEDGQIMFDVEMHTSKDHSSQSEEEVAEGEKEVDALKKSVDWVSDWSSRPENIPPKEFHFRHPKRSVSLSMRKSGAMKKGGIFSAEFLKVFIPSLFLSHVLALGLGIYIGKRLSTPSASTY</sequence>
<feature type="chain" id="PRO_0000269188" description="BCL2/adenovirus E1B 19 kDa protein-interacting protein 3-like">
    <location>
        <begin position="1"/>
        <end position="219"/>
    </location>
</feature>
<feature type="transmembrane region" description="Helical" evidence="4">
    <location>
        <begin position="187"/>
        <end position="207"/>
    </location>
</feature>
<feature type="region of interest" description="Disordered" evidence="5">
    <location>
        <begin position="1"/>
        <end position="101"/>
    </location>
</feature>
<feature type="region of interest" description="Disordered" evidence="5">
    <location>
        <begin position="112"/>
        <end position="131"/>
    </location>
</feature>
<feature type="short sequence motif" description="BH3">
    <location>
        <begin position="126"/>
        <end position="148"/>
    </location>
</feature>
<feature type="compositionally biased region" description="Low complexity" evidence="5">
    <location>
        <begin position="42"/>
        <end position="51"/>
    </location>
</feature>
<feature type="compositionally biased region" description="Basic and acidic residues" evidence="5">
    <location>
        <begin position="69"/>
        <end position="80"/>
    </location>
</feature>
<feature type="compositionally biased region" description="Low complexity" evidence="5">
    <location>
        <begin position="82"/>
        <end position="97"/>
    </location>
</feature>
<feature type="modified residue" description="Phosphoserine" evidence="2">
    <location>
        <position position="62"/>
    </location>
</feature>
<feature type="modified residue" description="Phosphoserine" evidence="3">
    <location>
        <position position="117"/>
    </location>
</feature>
<feature type="modified residue" description="Phosphoserine" evidence="2">
    <location>
        <position position="118"/>
    </location>
</feature>
<feature type="modified residue" description="Phosphoserine" evidence="2">
    <location>
        <position position="120"/>
    </location>
</feature>
<feature type="modified residue" description="Phosphoserine" evidence="2">
    <location>
        <position position="166"/>
    </location>
</feature>